<dbReference type="EMBL" id="AY781390">
    <property type="protein sequence ID" value="AAV51948.1"/>
    <property type="molecule type" value="mRNA"/>
</dbReference>
<dbReference type="STRING" id="9541.ENSMFAP00000034239"/>
<dbReference type="eggNOG" id="ENOG502T80H">
    <property type="taxonomic scope" value="Eukaryota"/>
</dbReference>
<dbReference type="Proteomes" id="UP000233100">
    <property type="component" value="Unplaced"/>
</dbReference>
<dbReference type="GO" id="GO:0070062">
    <property type="term" value="C:extracellular exosome"/>
    <property type="evidence" value="ECO:0007669"/>
    <property type="project" value="TreeGrafter"/>
</dbReference>
<dbReference type="GO" id="GO:0050817">
    <property type="term" value="P:coagulation"/>
    <property type="evidence" value="ECO:0007669"/>
    <property type="project" value="InterPro"/>
</dbReference>
<dbReference type="GO" id="GO:1901318">
    <property type="term" value="P:negative regulation of flagellated sperm motility"/>
    <property type="evidence" value="ECO:0007669"/>
    <property type="project" value="InterPro"/>
</dbReference>
<dbReference type="GO" id="GO:0048240">
    <property type="term" value="P:sperm capacitation"/>
    <property type="evidence" value="ECO:0007669"/>
    <property type="project" value="TreeGrafter"/>
</dbReference>
<dbReference type="InterPro" id="IPR008836">
    <property type="entry name" value="Semenogelin"/>
</dbReference>
<dbReference type="PANTHER" id="PTHR10547:SF6">
    <property type="entry name" value="SEMENOGELIN-2"/>
    <property type="match status" value="1"/>
</dbReference>
<dbReference type="PANTHER" id="PTHR10547">
    <property type="entry name" value="SEMENOGELIN/SEMINAL VESICLE SECRETORY PROTEIN"/>
    <property type="match status" value="1"/>
</dbReference>
<dbReference type="Pfam" id="PF05474">
    <property type="entry name" value="Semenogelin"/>
    <property type="match status" value="1"/>
</dbReference>
<sequence>MKSIILFVLSLLLILEKQAAVMGQKGGSKGQLSSGSSRFPHRHRSQHYSGQKDKQHTESKGSFSIQHTYHVDANDHDRTRKSQQYYLNAQHKTTKSKQHLRRHQRLLNYKQKGRGRVKPKRHFHLIVIHRKGGQVHHGTQNPSQDQGNSPSGKGISSQYSNTEERLRVRGLSKEQASASGAQKGRTQGGSQTNYVLQTEELVANKQQRETQNSHRNKGHYQNVVDVRXEHSSKLQTSLRPAHQHKLQHGYKDIFTTQDELLVYNKNQHQTKNLNQDQEHGRKAHKGSYQSSSTEERQPNHEEKSVQKGVPKGSISIQTEEKIYGKSQNQVTIPSQDQEHGHKENKISYQSSSAEERRLNSGEKGIQKGVSKGSISIQTEEKIHGKSQNQVAIPSQDQEHGHKENKISYQSSSAEERQLNSGEKGIQKGVSKGSISIQTEEKIYGKSQNQVTIPSQDQEHGHKENKIAYQSSSTEERQLNYGGKSIQKDVSQSSLSFQTEKLVEGKSQIQTPNPNQGQWSGQNAKGNSGKSADRKQDLLSHEQEGRYQQEFSGAHNTVNIEHKVAYDDLLTQQYNEDRNPIST</sequence>
<evidence type="ECO:0000250" key="1"/>
<evidence type="ECO:0000255" key="2"/>
<evidence type="ECO:0000256" key="3">
    <source>
        <dbReference type="SAM" id="MobiDB-lite"/>
    </source>
</evidence>
<evidence type="ECO:0000305" key="4"/>
<comment type="function">
    <text evidence="1">Participates in the formation of a gel matrix (sperm coagulum) entrapping the accessory gland secretions and ejaculated spermatozoa.</text>
</comment>
<comment type="subunit">
    <text evidence="1">Interacts with SERPINA5.</text>
</comment>
<comment type="subcellular location">
    <subcellularLocation>
        <location evidence="1">Secreted</location>
    </subcellularLocation>
</comment>
<comment type="similarity">
    <text evidence="4">Belongs to the semenogelin family.</text>
</comment>
<name>SEMG2_MACFA</name>
<organism>
    <name type="scientific">Macaca fascicularis</name>
    <name type="common">Crab-eating macaque</name>
    <name type="synonym">Cynomolgus monkey</name>
    <dbReference type="NCBI Taxonomy" id="9541"/>
    <lineage>
        <taxon>Eukaryota</taxon>
        <taxon>Metazoa</taxon>
        <taxon>Chordata</taxon>
        <taxon>Craniata</taxon>
        <taxon>Vertebrata</taxon>
        <taxon>Euteleostomi</taxon>
        <taxon>Mammalia</taxon>
        <taxon>Eutheria</taxon>
        <taxon>Euarchontoglires</taxon>
        <taxon>Primates</taxon>
        <taxon>Haplorrhini</taxon>
        <taxon>Catarrhini</taxon>
        <taxon>Cercopithecidae</taxon>
        <taxon>Cercopithecinae</taxon>
        <taxon>Macaca</taxon>
    </lineage>
</organism>
<protein>
    <recommendedName>
        <fullName>Semenogelin-2</fullName>
    </recommendedName>
    <alternativeName>
        <fullName>Semenogelin II</fullName>
        <shortName>SGII</shortName>
    </alternativeName>
</protein>
<gene>
    <name type="primary">SEMG2</name>
</gene>
<keyword id="KW-1185">Reference proteome</keyword>
<keyword id="KW-0677">Repeat</keyword>
<keyword id="KW-0964">Secreted</keyword>
<keyword id="KW-0732">Signal</keyword>
<reference key="1">
    <citation type="journal article" date="2004" name="Nat. Genet.">
        <title>Rate of molecular evolution of the seminal protein gene SEMG2 correlates with levels of female promiscuity.</title>
        <authorList>
            <person name="Dorus S."/>
            <person name="Evans P.D."/>
            <person name="Wyckoff G.J."/>
            <person name="Choi S.S."/>
            <person name="Lahn B.T."/>
        </authorList>
    </citation>
    <scope>NUCLEOTIDE SEQUENCE [MRNA]</scope>
</reference>
<accession>Q5U7N0</accession>
<feature type="signal peptide" evidence="2">
    <location>
        <begin position="1"/>
        <end position="23"/>
    </location>
</feature>
<feature type="chain" id="PRO_0000032362" description="Semenogelin-2">
    <location>
        <begin position="24"/>
        <end position="582"/>
    </location>
</feature>
<feature type="region of interest" description="Disordered" evidence="3">
    <location>
        <begin position="25"/>
        <end position="62"/>
    </location>
</feature>
<feature type="region of interest" description="Disordered" evidence="3">
    <location>
        <begin position="91"/>
        <end position="190"/>
    </location>
</feature>
<feature type="region of interest" description="Disordered" evidence="3">
    <location>
        <begin position="272"/>
        <end position="553"/>
    </location>
</feature>
<feature type="compositionally biased region" description="Basic and acidic residues" evidence="3">
    <location>
        <begin position="50"/>
        <end position="59"/>
    </location>
</feature>
<feature type="compositionally biased region" description="Basic residues" evidence="3">
    <location>
        <begin position="92"/>
        <end position="134"/>
    </location>
</feature>
<feature type="compositionally biased region" description="Polar residues" evidence="3">
    <location>
        <begin position="137"/>
        <end position="161"/>
    </location>
</feature>
<feature type="compositionally biased region" description="Polar residues" evidence="3">
    <location>
        <begin position="174"/>
        <end position="190"/>
    </location>
</feature>
<feature type="compositionally biased region" description="Basic and acidic residues" evidence="3">
    <location>
        <begin position="293"/>
        <end position="305"/>
    </location>
</feature>
<feature type="compositionally biased region" description="Polar residues" evidence="3">
    <location>
        <begin position="325"/>
        <end position="335"/>
    </location>
</feature>
<feature type="compositionally biased region" description="Basic and acidic residues" evidence="3">
    <location>
        <begin position="336"/>
        <end position="345"/>
    </location>
</feature>
<feature type="compositionally biased region" description="Polar residues" evidence="3">
    <location>
        <begin position="385"/>
        <end position="395"/>
    </location>
</feature>
<feature type="compositionally biased region" description="Basic and acidic residues" evidence="3">
    <location>
        <begin position="396"/>
        <end position="405"/>
    </location>
</feature>
<feature type="compositionally biased region" description="Polar residues" evidence="3">
    <location>
        <begin position="445"/>
        <end position="455"/>
    </location>
</feature>
<feature type="compositionally biased region" description="Basic and acidic residues" evidence="3">
    <location>
        <begin position="456"/>
        <end position="465"/>
    </location>
</feature>
<feature type="compositionally biased region" description="Polar residues" evidence="3">
    <location>
        <begin position="487"/>
        <end position="498"/>
    </location>
</feature>
<feature type="compositionally biased region" description="Polar residues" evidence="3">
    <location>
        <begin position="506"/>
        <end position="529"/>
    </location>
</feature>
<feature type="compositionally biased region" description="Basic and acidic residues" evidence="3">
    <location>
        <begin position="530"/>
        <end position="546"/>
    </location>
</feature>
<proteinExistence type="evidence at transcript level"/>